<feature type="chain" id="PRO_0000315615" description="Atos homolog protein A">
    <location>
        <begin position="1"/>
        <end position="1093"/>
    </location>
</feature>
<feature type="region of interest" description="Transactivation domain 1 (TAD1)" evidence="1">
    <location>
        <begin position="29"/>
        <end position="37"/>
    </location>
</feature>
<feature type="region of interest" description="Disordered" evidence="3">
    <location>
        <begin position="396"/>
        <end position="479"/>
    </location>
</feature>
<feature type="region of interest" description="Disordered" evidence="3">
    <location>
        <begin position="558"/>
        <end position="579"/>
    </location>
</feature>
<feature type="region of interest" description="Disordered" evidence="3">
    <location>
        <begin position="746"/>
        <end position="788"/>
    </location>
</feature>
<feature type="region of interest" description="Required for macropage invasion" evidence="1">
    <location>
        <begin position="895"/>
        <end position="952"/>
    </location>
</feature>
<feature type="region of interest" description="Transactivation domain 2 (TAD2)" evidence="1">
    <location>
        <begin position="979"/>
        <end position="987"/>
    </location>
</feature>
<feature type="compositionally biased region" description="Basic and acidic residues" evidence="3">
    <location>
        <begin position="746"/>
        <end position="763"/>
    </location>
</feature>
<feature type="sequence conflict" description="In Ref. 1; CAG32585." evidence="4" ref="1">
    <original>R</original>
    <variation>C</variation>
    <location>
        <position position="248"/>
    </location>
</feature>
<feature type="sequence conflict" description="In Ref. 1; CAG32585." evidence="4" ref="1">
    <original>I</original>
    <variation>V</variation>
    <location>
        <position position="318"/>
    </location>
</feature>
<keyword id="KW-0539">Nucleus</keyword>
<keyword id="KW-1185">Reference proteome</keyword>
<reference key="1">
    <citation type="journal article" date="2005" name="Genome Biol.">
        <title>Full-length cDNAs from chicken bursal lymphocytes to facilitate gene function analysis.</title>
        <authorList>
            <person name="Caldwell R.B."/>
            <person name="Kierzek A.M."/>
            <person name="Arakawa H."/>
            <person name="Bezzubov Y."/>
            <person name="Zaim J."/>
            <person name="Fiedler P."/>
            <person name="Kutter S."/>
            <person name="Blagodatski A."/>
            <person name="Kostovska D."/>
            <person name="Koter M."/>
            <person name="Plachy J."/>
            <person name="Carninci P."/>
            <person name="Hayashizaki Y."/>
            <person name="Buerstedde J.-M."/>
        </authorList>
    </citation>
    <scope>NUCLEOTIDE SEQUENCE [LARGE SCALE MRNA]</scope>
    <source>
        <strain>CB</strain>
        <tissue>Bursa of Fabricius</tissue>
    </source>
</reference>
<reference key="2">
    <citation type="journal article" date="2004" name="Nature">
        <title>Sequence and comparative analysis of the chicken genome provide unique perspectives on vertebrate evolution.</title>
        <authorList>
            <person name="Hillier L.W."/>
            <person name="Miller W."/>
            <person name="Birney E."/>
            <person name="Warren W."/>
            <person name="Hardison R.C."/>
            <person name="Ponting C.P."/>
            <person name="Bork P."/>
            <person name="Burt D.W."/>
            <person name="Groenen M.A.M."/>
            <person name="Delany M.E."/>
            <person name="Dodgson J.B."/>
            <person name="Chinwalla A.T."/>
            <person name="Cliften P.F."/>
            <person name="Clifton S.W."/>
            <person name="Delehaunty K.D."/>
            <person name="Fronick C."/>
            <person name="Fulton R.S."/>
            <person name="Graves T.A."/>
            <person name="Kremitzki C."/>
            <person name="Layman D."/>
            <person name="Magrini V."/>
            <person name="McPherson J.D."/>
            <person name="Miner T.L."/>
            <person name="Minx P."/>
            <person name="Nash W.E."/>
            <person name="Nhan M.N."/>
            <person name="Nelson J.O."/>
            <person name="Oddy L.G."/>
            <person name="Pohl C.S."/>
            <person name="Randall-Maher J."/>
            <person name="Smith S.M."/>
            <person name="Wallis J.W."/>
            <person name="Yang S.-P."/>
            <person name="Romanov M.N."/>
            <person name="Rondelli C.M."/>
            <person name="Paton B."/>
            <person name="Smith J."/>
            <person name="Morrice D."/>
            <person name="Daniels L."/>
            <person name="Tempest H.G."/>
            <person name="Robertson L."/>
            <person name="Masabanda J.S."/>
            <person name="Griffin D.K."/>
            <person name="Vignal A."/>
            <person name="Fillon V."/>
            <person name="Jacobbson L."/>
            <person name="Kerje S."/>
            <person name="Andersson L."/>
            <person name="Crooijmans R.P."/>
            <person name="Aerts J."/>
            <person name="van der Poel J.J."/>
            <person name="Ellegren H."/>
            <person name="Caldwell R.B."/>
            <person name="Hubbard S.J."/>
            <person name="Grafham D.V."/>
            <person name="Kierzek A.M."/>
            <person name="McLaren S.R."/>
            <person name="Overton I.M."/>
            <person name="Arakawa H."/>
            <person name="Beattie K.J."/>
            <person name="Bezzubov Y."/>
            <person name="Boardman P.E."/>
            <person name="Bonfield J.K."/>
            <person name="Croning M.D.R."/>
            <person name="Davies R.M."/>
            <person name="Francis M.D."/>
            <person name="Humphray S.J."/>
            <person name="Scott C.E."/>
            <person name="Taylor R.G."/>
            <person name="Tickle C."/>
            <person name="Brown W.R.A."/>
            <person name="Rogers J."/>
            <person name="Buerstedde J.-M."/>
            <person name="Wilson S.A."/>
            <person name="Stubbs L."/>
            <person name="Ovcharenko I."/>
            <person name="Gordon L."/>
            <person name="Lucas S."/>
            <person name="Miller M.M."/>
            <person name="Inoko H."/>
            <person name="Shiina T."/>
            <person name="Kaufman J."/>
            <person name="Salomonsen J."/>
            <person name="Skjoedt K."/>
            <person name="Wong G.K.-S."/>
            <person name="Wang J."/>
            <person name="Liu B."/>
            <person name="Wang J."/>
            <person name="Yu J."/>
            <person name="Yang H."/>
            <person name="Nefedov M."/>
            <person name="Koriabine M."/>
            <person name="Dejong P.J."/>
            <person name="Goodstadt L."/>
            <person name="Webber C."/>
            <person name="Dickens N.J."/>
            <person name="Letunic I."/>
            <person name="Suyama M."/>
            <person name="Torrents D."/>
            <person name="von Mering C."/>
            <person name="Zdobnov E.M."/>
            <person name="Makova K."/>
            <person name="Nekrutenko A."/>
            <person name="Elnitski L."/>
            <person name="Eswara P."/>
            <person name="King D.C."/>
            <person name="Yang S.-P."/>
            <person name="Tyekucheva S."/>
            <person name="Radakrishnan A."/>
            <person name="Harris R.S."/>
            <person name="Chiaromonte F."/>
            <person name="Taylor J."/>
            <person name="He J."/>
            <person name="Rijnkels M."/>
            <person name="Griffiths-Jones S."/>
            <person name="Ureta-Vidal A."/>
            <person name="Hoffman M.M."/>
            <person name="Severin J."/>
            <person name="Searle S.M.J."/>
            <person name="Law A.S."/>
            <person name="Speed D."/>
            <person name="Waddington D."/>
            <person name="Cheng Z."/>
            <person name="Tuzun E."/>
            <person name="Eichler E."/>
            <person name="Bao Z."/>
            <person name="Flicek P."/>
            <person name="Shteynberg D.D."/>
            <person name="Brent M.R."/>
            <person name="Bye J.M."/>
            <person name="Huckle E.J."/>
            <person name="Chatterji S."/>
            <person name="Dewey C."/>
            <person name="Pachter L."/>
            <person name="Kouranov A."/>
            <person name="Mourelatos Z."/>
            <person name="Hatzigeorgiou A.G."/>
            <person name="Paterson A.H."/>
            <person name="Ivarie R."/>
            <person name="Brandstrom M."/>
            <person name="Axelsson E."/>
            <person name="Backstrom N."/>
            <person name="Berlin S."/>
            <person name="Webster M.T."/>
            <person name="Pourquie O."/>
            <person name="Reymond A."/>
            <person name="Ucla C."/>
            <person name="Antonarakis S.E."/>
            <person name="Long M."/>
            <person name="Emerson J.J."/>
            <person name="Betran E."/>
            <person name="Dupanloup I."/>
            <person name="Kaessmann H."/>
            <person name="Hinrichs A.S."/>
            <person name="Bejerano G."/>
            <person name="Furey T.S."/>
            <person name="Harte R.A."/>
            <person name="Raney B."/>
            <person name="Siepel A."/>
            <person name="Kent W.J."/>
            <person name="Haussler D."/>
            <person name="Eyras E."/>
            <person name="Castelo R."/>
            <person name="Abril J.F."/>
            <person name="Castellano S."/>
            <person name="Camara F."/>
            <person name="Parra G."/>
            <person name="Guigo R."/>
            <person name="Bourque G."/>
            <person name="Tesler G."/>
            <person name="Pevzner P.A."/>
            <person name="Smit A."/>
            <person name="Fulton L.A."/>
            <person name="Mardis E.R."/>
            <person name="Wilson R.K."/>
        </authorList>
    </citation>
    <scope>NUCLEOTIDE SEQUENCE [LARGE SCALE GENOMIC DNA]</scope>
    <source>
        <strain>Red jungle fowl</strain>
    </source>
</reference>
<gene>
    <name type="primary">ATOSA</name>
    <name type="synonym">FAM214A</name>
    <name type="ORF">RCJMB04_30b20</name>
</gene>
<evidence type="ECO:0000250" key="1">
    <source>
        <dbReference type="UniProtKB" id="Q69ZK7"/>
    </source>
</evidence>
<evidence type="ECO:0000250" key="2">
    <source>
        <dbReference type="UniProtKB" id="Q7JXG9"/>
    </source>
</evidence>
<evidence type="ECO:0000256" key="3">
    <source>
        <dbReference type="SAM" id="MobiDB-lite"/>
    </source>
</evidence>
<evidence type="ECO:0000305" key="4"/>
<organism>
    <name type="scientific">Gallus gallus</name>
    <name type="common">Chicken</name>
    <dbReference type="NCBI Taxonomy" id="9031"/>
    <lineage>
        <taxon>Eukaryota</taxon>
        <taxon>Metazoa</taxon>
        <taxon>Chordata</taxon>
        <taxon>Craniata</taxon>
        <taxon>Vertebrata</taxon>
        <taxon>Euteleostomi</taxon>
        <taxon>Archelosauria</taxon>
        <taxon>Archosauria</taxon>
        <taxon>Dinosauria</taxon>
        <taxon>Saurischia</taxon>
        <taxon>Theropoda</taxon>
        <taxon>Coelurosauria</taxon>
        <taxon>Aves</taxon>
        <taxon>Neognathae</taxon>
        <taxon>Galloanserae</taxon>
        <taxon>Galliformes</taxon>
        <taxon>Phasianidae</taxon>
        <taxon>Phasianinae</taxon>
        <taxon>Gallus</taxon>
    </lineage>
</organism>
<accession>Q5ZI58</accession>
<accession>F1NMC2</accession>
<comment type="function">
    <text evidence="1">Transcription regulator that syncronizes transcriptional and translational programs to promote macrophage invasion of tissues.</text>
</comment>
<comment type="subcellular location">
    <subcellularLocation>
        <location evidence="2">Nucleus</location>
    </subcellularLocation>
</comment>
<comment type="domain">
    <text evidence="1">The protein contains 2 transactivation domains (TAD). Each of these domains may be required for transcriptional activation of a subset of target genes.</text>
</comment>
<comment type="similarity">
    <text evidence="4">Belongs to the ATOS family.</text>
</comment>
<name>ATOSA_CHICK</name>
<sequence>MNAERNGSSTDTLDEYFEYEAEEFLVSLALLITEGRTPEHSIKGRTEGFHCPPAQSSQPPTTKHECSDKLAQCRQARRTRSEVMLLWKNNIPIMVEVMLLPDCCYSDEGPNTEGNDLNDPAIKQDALLLERWILEPVPRQSGDRFIEEKTLLLAVRSFVFFSQLSAWLSVSHGAVPRNILYRVSAADVDLQWTFSQTPTEHVFPVPNVSHNVALKVSVQSLPRQSNYPVLTCSIHTNLSYYEKQMKERKLHQHSESSTAELCGTSSPQRVCGKQAWTVIPEGLLNVKKTPEFTSSIRNLKLYPSTGLGSDFAASQSKIQCYNAAADSKTQSHETAVRTFKSLSLVDSRVSNGHCSHQSTGETNPLIGSLLQERQEVIARIAQHLIHCDPATSPVVAGRPFNMRETSTPTPKAYRSTYEDESLLRKGKETSPVPTVNLDNAIQEDGGEGKTRAIPEMPRLNPRAPVNHCGRPSAGEGNPLIDSLLQERRDVIARIAQHLIHCDPATSHVNGRPFKIHETSPVSSKIFRSTYEDENLLKKVKQPSSVSFAKSSFSLLEDSSKSKLKTPDTPISPRLDGESKASLKLQARRKLVLAKPSDAVQNAFHQTSNKTSHSFTNTHTSSSCVKENKSELLDKLEMMQSDYVQKDQITNRIKQCSNFSSVDEQICTNKLKERTVVSESNNTGTLNNLQIDKCRILEGTKKATVMQASDSLHKNELKCSDKDSKKPSIYEQNTQLISIENYLNKDHDNFKNKNRQDKTKAAHDENEEPVGLDFQSTSQKKPTEDGSMRCERLKNPDVQRAPSLKHTNTWRKHNFRSLDGTSTKAFHPRTGLPLLSSPVPQRKTHSGCFDLDSSLLQLKCLSARSPQQCINRESDPESHGKPFLSSSAPPVTSLSLLGNFEESVLNFRLDPLGIVEGFTAEVGASGVFCPTHMTLPVEVSFYSVSDDNAPSPYMGVITLESLGKRGYRVPPSGTIQVTLFNPNKTVVKMFVVIYDLREMPANHQTFLRQRTFSVPVRREIKRTVNKENSQQTEERLLRYLIHLRFQSSKSGKIYLHRDVRLLFSRKSMEVDSGAAYELKSYTESPTNPQFSPRC</sequence>
<protein>
    <recommendedName>
        <fullName>Atos homolog protein A</fullName>
    </recommendedName>
</protein>
<proteinExistence type="evidence at transcript level"/>
<dbReference type="EMBL" id="AJ720926">
    <property type="protein sequence ID" value="CAG32585.1"/>
    <property type="molecule type" value="mRNA"/>
</dbReference>
<dbReference type="EMBL" id="AADN02045403">
    <property type="status" value="NOT_ANNOTATED_CDS"/>
    <property type="molecule type" value="Genomic_DNA"/>
</dbReference>
<dbReference type="EMBL" id="AADN02045404">
    <property type="status" value="NOT_ANNOTATED_CDS"/>
    <property type="molecule type" value="Genomic_DNA"/>
</dbReference>
<dbReference type="EMBL" id="AADN02045405">
    <property type="status" value="NOT_ANNOTATED_CDS"/>
    <property type="molecule type" value="Genomic_DNA"/>
</dbReference>
<dbReference type="EMBL" id="AADN02045406">
    <property type="status" value="NOT_ANNOTATED_CDS"/>
    <property type="molecule type" value="Genomic_DNA"/>
</dbReference>
<dbReference type="EMBL" id="AADN02045407">
    <property type="status" value="NOT_ANNOTATED_CDS"/>
    <property type="molecule type" value="Genomic_DNA"/>
</dbReference>
<dbReference type="EMBL" id="AADN02045408">
    <property type="status" value="NOT_ANNOTATED_CDS"/>
    <property type="molecule type" value="Genomic_DNA"/>
</dbReference>
<dbReference type="EMBL" id="AADN02045409">
    <property type="status" value="NOT_ANNOTATED_CDS"/>
    <property type="molecule type" value="Genomic_DNA"/>
</dbReference>
<dbReference type="EMBL" id="AADN02045410">
    <property type="status" value="NOT_ANNOTATED_CDS"/>
    <property type="molecule type" value="Genomic_DNA"/>
</dbReference>
<dbReference type="RefSeq" id="NP_001005811.1">
    <property type="nucleotide sequence ID" value="NM_001005811.1"/>
</dbReference>
<dbReference type="RefSeq" id="XP_015147386.1">
    <property type="nucleotide sequence ID" value="XM_015291900.1"/>
</dbReference>
<dbReference type="RefSeq" id="XP_015147387.1">
    <property type="nucleotide sequence ID" value="XM_015291901.1"/>
</dbReference>
<dbReference type="FunCoup" id="Q5ZI58">
    <property type="interactions" value="345"/>
</dbReference>
<dbReference type="STRING" id="9031.ENSGALP00000050061"/>
<dbReference type="PaxDb" id="9031-ENSGALP00000007252"/>
<dbReference type="Ensembl" id="ENSGALT00010050046.1">
    <property type="protein sequence ID" value="ENSGALP00010029568.1"/>
    <property type="gene ID" value="ENSGALG00010020708.1"/>
</dbReference>
<dbReference type="GeneID" id="415416"/>
<dbReference type="KEGG" id="gga:415416"/>
<dbReference type="CTD" id="415416"/>
<dbReference type="VEuPathDB" id="HostDB:geneid_415416"/>
<dbReference type="eggNOG" id="KOG2306">
    <property type="taxonomic scope" value="Eukaryota"/>
</dbReference>
<dbReference type="GeneTree" id="ENSGT00940000157573"/>
<dbReference type="InParanoid" id="Q5ZI58"/>
<dbReference type="OMA" id="QTHPRSQ"/>
<dbReference type="OrthoDB" id="8625101at2759"/>
<dbReference type="TreeFam" id="TF325496"/>
<dbReference type="PRO" id="PR:Q5ZI58"/>
<dbReference type="Proteomes" id="UP000000539">
    <property type="component" value="Chromosome 10"/>
</dbReference>
<dbReference type="Bgee" id="ENSGALG00000042839">
    <property type="expression patterns" value="Expressed in cerebellum and 12 other cell types or tissues"/>
</dbReference>
<dbReference type="GO" id="GO:0005634">
    <property type="term" value="C:nucleus"/>
    <property type="evidence" value="ECO:0007669"/>
    <property type="project" value="UniProtKB-SubCell"/>
</dbReference>
<dbReference type="InterPro" id="IPR033473">
    <property type="entry name" value="Atos-like_C"/>
</dbReference>
<dbReference type="InterPro" id="IPR025261">
    <property type="entry name" value="Atos-like_cons_dom"/>
</dbReference>
<dbReference type="InterPro" id="IPR051506">
    <property type="entry name" value="ATOS_Transcription_Regulators"/>
</dbReference>
<dbReference type="PANTHER" id="PTHR13199:SF13">
    <property type="entry name" value="ATOS HOMOLOG PROTEIN A"/>
    <property type="match status" value="1"/>
</dbReference>
<dbReference type="PANTHER" id="PTHR13199">
    <property type="entry name" value="GH03947P"/>
    <property type="match status" value="1"/>
</dbReference>
<dbReference type="Pfam" id="PF13889">
    <property type="entry name" value="Chromosome_seg"/>
    <property type="match status" value="1"/>
</dbReference>
<dbReference type="Pfam" id="PF13915">
    <property type="entry name" value="DUF4210"/>
    <property type="match status" value="1"/>
</dbReference>
<dbReference type="SMART" id="SM01177">
    <property type="entry name" value="DUF4210"/>
    <property type="match status" value="1"/>
</dbReference>